<protein>
    <recommendedName>
        <fullName>Putative tyrosine-protein kinase EpsB</fullName>
        <ecNumber>2.7.10.-</ecNumber>
    </recommendedName>
    <alternativeName>
        <fullName>EPS I polysaccharide export protein EpsB</fullName>
    </alternativeName>
</protein>
<reference key="1">
    <citation type="journal article" date="1995" name="Mol. Microbiol.">
        <title>Molecular characterization of the eps gene cluster of Pseudomonas solanacearum and its transcriptional regulation at a single promoter.</title>
        <authorList>
            <person name="Huang J."/>
            <person name="Schell M."/>
        </authorList>
    </citation>
    <scope>NUCLEOTIDE SEQUENCE [GENOMIC DNA]</scope>
    <source>
        <strain>AW</strain>
    </source>
</reference>
<gene>
    <name type="primary">epsB</name>
</gene>
<dbReference type="EC" id="2.7.10.-"/>
<dbReference type="EMBL" id="U17898">
    <property type="protein sequence ID" value="AAA91625.1"/>
    <property type="molecule type" value="Genomic_DNA"/>
</dbReference>
<dbReference type="PIR" id="S77636">
    <property type="entry name" value="S77636"/>
</dbReference>
<dbReference type="SMR" id="Q45409"/>
<dbReference type="TCDB" id="8.A.3.3.3">
    <property type="family name" value="the cytoplasmic membrane-periplasmic auxiliary-1 (mpa1) protein with cytoplasmic (c) domain (mpa1-c or mpa1+c) family"/>
</dbReference>
<dbReference type="PHI-base" id="PHI:123504"/>
<dbReference type="GO" id="GO:0005886">
    <property type="term" value="C:plasma membrane"/>
    <property type="evidence" value="ECO:0007669"/>
    <property type="project" value="UniProtKB-SubCell"/>
</dbReference>
<dbReference type="GO" id="GO:0005524">
    <property type="term" value="F:ATP binding"/>
    <property type="evidence" value="ECO:0007669"/>
    <property type="project" value="UniProtKB-KW"/>
</dbReference>
<dbReference type="GO" id="GO:0004713">
    <property type="term" value="F:protein tyrosine kinase activity"/>
    <property type="evidence" value="ECO:0007669"/>
    <property type="project" value="UniProtKB-KW"/>
</dbReference>
<dbReference type="GO" id="GO:0000271">
    <property type="term" value="P:polysaccharide biosynthetic process"/>
    <property type="evidence" value="ECO:0007669"/>
    <property type="project" value="UniProtKB-KW"/>
</dbReference>
<dbReference type="CDD" id="cd05387">
    <property type="entry name" value="BY-kinase"/>
    <property type="match status" value="1"/>
</dbReference>
<dbReference type="FunFam" id="3.40.50.300:FF:000527">
    <property type="entry name" value="Tyrosine-protein kinase etk"/>
    <property type="match status" value="1"/>
</dbReference>
<dbReference type="Gene3D" id="3.40.50.300">
    <property type="entry name" value="P-loop containing nucleotide triphosphate hydrolases"/>
    <property type="match status" value="1"/>
</dbReference>
<dbReference type="InterPro" id="IPR025669">
    <property type="entry name" value="AAA_dom"/>
</dbReference>
<dbReference type="InterPro" id="IPR050445">
    <property type="entry name" value="Bact_polysacc_biosynth/exp"/>
</dbReference>
<dbReference type="InterPro" id="IPR005700">
    <property type="entry name" value="EPS_ExoP-like"/>
</dbReference>
<dbReference type="InterPro" id="IPR032807">
    <property type="entry name" value="GNVR"/>
</dbReference>
<dbReference type="InterPro" id="IPR003856">
    <property type="entry name" value="LPS_length_determ_N_term"/>
</dbReference>
<dbReference type="InterPro" id="IPR027417">
    <property type="entry name" value="P-loop_NTPase"/>
</dbReference>
<dbReference type="InterPro" id="IPR005702">
    <property type="entry name" value="Wzc-like_C"/>
</dbReference>
<dbReference type="NCBIfam" id="TIGR01007">
    <property type="entry name" value="eps_fam"/>
    <property type="match status" value="1"/>
</dbReference>
<dbReference type="NCBIfam" id="TIGR01005">
    <property type="entry name" value="eps_transp_fam"/>
    <property type="match status" value="1"/>
</dbReference>
<dbReference type="PANTHER" id="PTHR32309">
    <property type="entry name" value="TYROSINE-PROTEIN KINASE"/>
    <property type="match status" value="1"/>
</dbReference>
<dbReference type="PANTHER" id="PTHR32309:SF32">
    <property type="entry name" value="TYROSINE-PROTEIN KINASE ETK-RELATED"/>
    <property type="match status" value="1"/>
</dbReference>
<dbReference type="Pfam" id="PF13614">
    <property type="entry name" value="AAA_31"/>
    <property type="match status" value="1"/>
</dbReference>
<dbReference type="Pfam" id="PF13807">
    <property type="entry name" value="GNVR"/>
    <property type="match status" value="1"/>
</dbReference>
<dbReference type="Pfam" id="PF23607">
    <property type="entry name" value="WZC_N"/>
    <property type="match status" value="1"/>
</dbReference>
<dbReference type="Pfam" id="PF02706">
    <property type="entry name" value="Wzz"/>
    <property type="match status" value="1"/>
</dbReference>
<dbReference type="SUPFAM" id="SSF52540">
    <property type="entry name" value="P-loop containing nucleoside triphosphate hydrolases"/>
    <property type="match status" value="1"/>
</dbReference>
<evidence type="ECO:0000255" key="1"/>
<evidence type="ECO:0000305" key="2"/>
<proteinExistence type="inferred from homology"/>
<comment type="function">
    <text>Probably involved in polymerization and/or export of exopolysaccharide EPS I which functions as a virulence factor. May be involved in an ATP-dependent process in the pathway for EPS I production, possibly export of the trimeric repeat units across the inner membrane or their polymerization.</text>
</comment>
<comment type="catalytic activity">
    <reaction>
        <text>L-tyrosyl-[protein] + ATP = O-phospho-L-tyrosyl-[protein] + ADP + H(+)</text>
        <dbReference type="Rhea" id="RHEA:10596"/>
        <dbReference type="Rhea" id="RHEA-COMP:10136"/>
        <dbReference type="Rhea" id="RHEA-COMP:20101"/>
        <dbReference type="ChEBI" id="CHEBI:15378"/>
        <dbReference type="ChEBI" id="CHEBI:30616"/>
        <dbReference type="ChEBI" id="CHEBI:46858"/>
        <dbReference type="ChEBI" id="CHEBI:61978"/>
        <dbReference type="ChEBI" id="CHEBI:456216"/>
    </reaction>
</comment>
<comment type="subcellular location">
    <subcellularLocation>
        <location>Cell inner membrane</location>
        <topology>Multi-pass membrane protein</topology>
    </subcellularLocation>
</comment>
<comment type="similarity">
    <text evidence="2">Belongs to the etk/wzc family.</text>
</comment>
<sequence length="750" mass="82266">MTQNLPQPPAVNAPENELDLVRYLDVLVANRWLIAGIAAAVMLLGAAYAFLARPVYEADIMVQVEDNPNSAKSLLGDVSSLFDVKTDANAEIEILRSRMVVGKAVDNLHLYITAKPRYFPLIGAWISSRATRLSEPGLFGLGGYVWGTESIDVDGFDVPEALEGQPFKLIVLGNGRYRLENKSLDAPIEGVVGEPLEAKQSIGTIQLQVNNLTAKAGATFELERDSRLKTMEMLQDKLKIAEKGKQSGIIGASLDGTNPALTAAIMNQIATEYVAQNIKRKAEEAERSLVFLDGLLPQLKLELERAEMKYNEMRNLRGTFDLSEEGKAFLQESVTVETSLQELKQKRAELLTRFTSSHPGVQAIDQQISVMSGKVNSMTRRLKSLPNIEQDTVRLMRDVQVDNELYVSLLNDMQQLKLVKAGKVGNVRLVDGAAVPEEPVKPKKLTVTPLAGVLGVVLGVMAAFVRNALFGGITDPQDIEEHTGLSVYATVPLSDTQVDLSGQLTTRKRGQYLLARRVPDDPSIEALRSLRTALQFAMQDAGNNLVVLTGPTPGVGKSFVSANLAAVIATGGKRVLLIDADMRKGYLHQYFGKDRKPGLLDLLAGNRSIEQVVHREVVPGLDFIATGLFPHNPSELLLNPRMVELMDTFRSQYDLVLVDTPPVLAVADTAILAARAGLVLLVTRFERSTLGEIRETIKQLQHANVDVRGVVFNALDPNTYRYGYGSRYGRYRYVQYGYTSNSKPPEAESA</sequence>
<feature type="chain" id="PRO_0000212359" description="Putative tyrosine-protein kinase EpsB">
    <location>
        <begin position="1"/>
        <end position="750"/>
    </location>
</feature>
<feature type="topological domain" description="Cytoplasmic" evidence="1">
    <location>
        <begin position="1"/>
        <end position="31"/>
    </location>
</feature>
<feature type="transmembrane region" description="Helical" evidence="1">
    <location>
        <begin position="32"/>
        <end position="52"/>
    </location>
</feature>
<feature type="topological domain" description="Periplasmic" evidence="1">
    <location>
        <begin position="53"/>
        <end position="444"/>
    </location>
</feature>
<feature type="transmembrane region" description="Helical" evidence="1">
    <location>
        <begin position="445"/>
        <end position="465"/>
    </location>
</feature>
<feature type="topological domain" description="Cytoplasmic" evidence="1">
    <location>
        <begin position="466"/>
        <end position="750"/>
    </location>
</feature>
<accession>Q45409</accession>
<name>EPSB_RALSL</name>
<keyword id="KW-0067">ATP-binding</keyword>
<keyword id="KW-0997">Cell inner membrane</keyword>
<keyword id="KW-1003">Cell membrane</keyword>
<keyword id="KW-0270">Exopolysaccharide synthesis</keyword>
<keyword id="KW-0418">Kinase</keyword>
<keyword id="KW-0472">Membrane</keyword>
<keyword id="KW-0547">Nucleotide-binding</keyword>
<keyword id="KW-0614">Plasmid</keyword>
<keyword id="KW-0808">Transferase</keyword>
<keyword id="KW-0812">Transmembrane</keyword>
<keyword id="KW-1133">Transmembrane helix</keyword>
<keyword id="KW-0829">Tyrosine-protein kinase</keyword>
<keyword id="KW-0843">Virulence</keyword>
<organism>
    <name type="scientific">Ralstonia solanacearum</name>
    <name type="common">Pseudomonas solanacearum</name>
    <dbReference type="NCBI Taxonomy" id="305"/>
    <lineage>
        <taxon>Bacteria</taxon>
        <taxon>Pseudomonadati</taxon>
        <taxon>Pseudomonadota</taxon>
        <taxon>Betaproteobacteria</taxon>
        <taxon>Burkholderiales</taxon>
        <taxon>Burkholderiaceae</taxon>
        <taxon>Ralstonia</taxon>
        <taxon>Ralstonia solanacearum species complex</taxon>
    </lineage>
</organism>